<gene>
    <name evidence="1" type="primary">glmU</name>
    <name type="ordered locus">ABO_2724</name>
</gene>
<feature type="chain" id="PRO_0000263117" description="Bifunctional protein GlmU">
    <location>
        <begin position="1"/>
        <end position="452"/>
    </location>
</feature>
<feature type="region of interest" description="Pyrophosphorylase" evidence="1">
    <location>
        <begin position="1"/>
        <end position="226"/>
    </location>
</feature>
<feature type="region of interest" description="Linker" evidence="1">
    <location>
        <begin position="227"/>
        <end position="247"/>
    </location>
</feature>
<feature type="region of interest" description="N-acetyltransferase" evidence="1">
    <location>
        <begin position="248"/>
        <end position="452"/>
    </location>
</feature>
<feature type="active site" description="Proton acceptor" evidence="1">
    <location>
        <position position="360"/>
    </location>
</feature>
<feature type="binding site" evidence="1">
    <location>
        <begin position="8"/>
        <end position="11"/>
    </location>
    <ligand>
        <name>UDP-N-acetyl-alpha-D-glucosamine</name>
        <dbReference type="ChEBI" id="CHEBI:57705"/>
    </ligand>
</feature>
<feature type="binding site" evidence="1">
    <location>
        <position position="22"/>
    </location>
    <ligand>
        <name>UDP-N-acetyl-alpha-D-glucosamine</name>
        <dbReference type="ChEBI" id="CHEBI:57705"/>
    </ligand>
</feature>
<feature type="binding site" evidence="1">
    <location>
        <position position="73"/>
    </location>
    <ligand>
        <name>UDP-N-acetyl-alpha-D-glucosamine</name>
        <dbReference type="ChEBI" id="CHEBI:57705"/>
    </ligand>
</feature>
<feature type="binding site" evidence="1">
    <location>
        <begin position="78"/>
        <end position="79"/>
    </location>
    <ligand>
        <name>UDP-N-acetyl-alpha-D-glucosamine</name>
        <dbReference type="ChEBI" id="CHEBI:57705"/>
    </ligand>
</feature>
<feature type="binding site" evidence="1">
    <location>
        <begin position="99"/>
        <end position="101"/>
    </location>
    <ligand>
        <name>UDP-N-acetyl-alpha-D-glucosamine</name>
        <dbReference type="ChEBI" id="CHEBI:57705"/>
    </ligand>
</feature>
<feature type="binding site" evidence="1">
    <location>
        <position position="101"/>
    </location>
    <ligand>
        <name>Mg(2+)</name>
        <dbReference type="ChEBI" id="CHEBI:18420"/>
    </ligand>
</feature>
<feature type="binding site" evidence="1">
    <location>
        <position position="136"/>
    </location>
    <ligand>
        <name>UDP-N-acetyl-alpha-D-glucosamine</name>
        <dbReference type="ChEBI" id="CHEBI:57705"/>
    </ligand>
</feature>
<feature type="binding site" evidence="1">
    <location>
        <position position="151"/>
    </location>
    <ligand>
        <name>UDP-N-acetyl-alpha-D-glucosamine</name>
        <dbReference type="ChEBI" id="CHEBI:57705"/>
    </ligand>
</feature>
<feature type="binding site" evidence="1">
    <location>
        <position position="166"/>
    </location>
    <ligand>
        <name>UDP-N-acetyl-alpha-D-glucosamine</name>
        <dbReference type="ChEBI" id="CHEBI:57705"/>
    </ligand>
</feature>
<feature type="binding site" evidence="1">
    <location>
        <position position="224"/>
    </location>
    <ligand>
        <name>Mg(2+)</name>
        <dbReference type="ChEBI" id="CHEBI:18420"/>
    </ligand>
</feature>
<feature type="binding site" evidence="1">
    <location>
        <position position="224"/>
    </location>
    <ligand>
        <name>UDP-N-acetyl-alpha-D-glucosamine</name>
        <dbReference type="ChEBI" id="CHEBI:57705"/>
    </ligand>
</feature>
<feature type="binding site" evidence="1">
    <location>
        <position position="330"/>
    </location>
    <ligand>
        <name>UDP-N-acetyl-alpha-D-glucosamine</name>
        <dbReference type="ChEBI" id="CHEBI:57705"/>
    </ligand>
</feature>
<feature type="binding site" evidence="1">
    <location>
        <position position="348"/>
    </location>
    <ligand>
        <name>UDP-N-acetyl-alpha-D-glucosamine</name>
        <dbReference type="ChEBI" id="CHEBI:57705"/>
    </ligand>
</feature>
<feature type="binding site" evidence="1">
    <location>
        <position position="363"/>
    </location>
    <ligand>
        <name>UDP-N-acetyl-alpha-D-glucosamine</name>
        <dbReference type="ChEBI" id="CHEBI:57705"/>
    </ligand>
</feature>
<feature type="binding site" evidence="1">
    <location>
        <position position="374"/>
    </location>
    <ligand>
        <name>UDP-N-acetyl-alpha-D-glucosamine</name>
        <dbReference type="ChEBI" id="CHEBI:57705"/>
    </ligand>
</feature>
<feature type="binding site" evidence="1">
    <location>
        <position position="377"/>
    </location>
    <ligand>
        <name>acetyl-CoA</name>
        <dbReference type="ChEBI" id="CHEBI:57288"/>
    </ligand>
</feature>
<feature type="binding site" evidence="1">
    <location>
        <begin position="383"/>
        <end position="384"/>
    </location>
    <ligand>
        <name>acetyl-CoA</name>
        <dbReference type="ChEBI" id="CHEBI:57288"/>
    </ligand>
</feature>
<feature type="binding site" evidence="1">
    <location>
        <position position="402"/>
    </location>
    <ligand>
        <name>acetyl-CoA</name>
        <dbReference type="ChEBI" id="CHEBI:57288"/>
    </ligand>
</feature>
<feature type="binding site" evidence="1">
    <location>
        <position position="420"/>
    </location>
    <ligand>
        <name>acetyl-CoA</name>
        <dbReference type="ChEBI" id="CHEBI:57288"/>
    </ligand>
</feature>
<feature type="binding site" evidence="1">
    <location>
        <position position="437"/>
    </location>
    <ligand>
        <name>acetyl-CoA</name>
        <dbReference type="ChEBI" id="CHEBI:57288"/>
    </ligand>
</feature>
<protein>
    <recommendedName>
        <fullName evidence="1">Bifunctional protein GlmU</fullName>
    </recommendedName>
    <domain>
        <recommendedName>
            <fullName evidence="1">UDP-N-acetylglucosamine pyrophosphorylase</fullName>
            <ecNumber evidence="1">2.7.7.23</ecNumber>
        </recommendedName>
        <alternativeName>
            <fullName evidence="1">N-acetylglucosamine-1-phosphate uridyltransferase</fullName>
        </alternativeName>
    </domain>
    <domain>
        <recommendedName>
            <fullName evidence="1">Glucosamine-1-phosphate N-acetyltransferase</fullName>
            <ecNumber evidence="1">2.3.1.157</ecNumber>
        </recommendedName>
    </domain>
</protein>
<proteinExistence type="inferred from homology"/>
<evidence type="ECO:0000255" key="1">
    <source>
        <dbReference type="HAMAP-Rule" id="MF_01631"/>
    </source>
</evidence>
<organism>
    <name type="scientific">Alcanivorax borkumensis (strain ATCC 700651 / DSM 11573 / NCIMB 13689 / SK2)</name>
    <dbReference type="NCBI Taxonomy" id="393595"/>
    <lineage>
        <taxon>Bacteria</taxon>
        <taxon>Pseudomonadati</taxon>
        <taxon>Pseudomonadota</taxon>
        <taxon>Gammaproteobacteria</taxon>
        <taxon>Oceanospirillales</taxon>
        <taxon>Alcanivoracaceae</taxon>
        <taxon>Alcanivorax</taxon>
    </lineage>
</organism>
<dbReference type="EC" id="2.7.7.23" evidence="1"/>
<dbReference type="EC" id="2.3.1.157" evidence="1"/>
<dbReference type="EMBL" id="AM286690">
    <property type="protein sequence ID" value="CAL18172.1"/>
    <property type="molecule type" value="Genomic_DNA"/>
</dbReference>
<dbReference type="RefSeq" id="WP_011589995.1">
    <property type="nucleotide sequence ID" value="NC_008260.1"/>
</dbReference>
<dbReference type="SMR" id="Q0VKX6"/>
<dbReference type="STRING" id="393595.ABO_2724"/>
<dbReference type="KEGG" id="abo:ABO_2724"/>
<dbReference type="eggNOG" id="COG1207">
    <property type="taxonomic scope" value="Bacteria"/>
</dbReference>
<dbReference type="HOGENOM" id="CLU_029499_15_2_6"/>
<dbReference type="OrthoDB" id="9775031at2"/>
<dbReference type="UniPathway" id="UPA00113">
    <property type="reaction ID" value="UER00532"/>
</dbReference>
<dbReference type="UniPathway" id="UPA00113">
    <property type="reaction ID" value="UER00533"/>
</dbReference>
<dbReference type="UniPathway" id="UPA00973"/>
<dbReference type="Proteomes" id="UP000008871">
    <property type="component" value="Chromosome"/>
</dbReference>
<dbReference type="GO" id="GO:0005737">
    <property type="term" value="C:cytoplasm"/>
    <property type="evidence" value="ECO:0007669"/>
    <property type="project" value="UniProtKB-SubCell"/>
</dbReference>
<dbReference type="GO" id="GO:0016020">
    <property type="term" value="C:membrane"/>
    <property type="evidence" value="ECO:0007669"/>
    <property type="project" value="GOC"/>
</dbReference>
<dbReference type="GO" id="GO:0019134">
    <property type="term" value="F:glucosamine-1-phosphate N-acetyltransferase activity"/>
    <property type="evidence" value="ECO:0007669"/>
    <property type="project" value="UniProtKB-UniRule"/>
</dbReference>
<dbReference type="GO" id="GO:0000287">
    <property type="term" value="F:magnesium ion binding"/>
    <property type="evidence" value="ECO:0007669"/>
    <property type="project" value="UniProtKB-UniRule"/>
</dbReference>
<dbReference type="GO" id="GO:0003977">
    <property type="term" value="F:UDP-N-acetylglucosamine diphosphorylase activity"/>
    <property type="evidence" value="ECO:0007669"/>
    <property type="project" value="UniProtKB-UniRule"/>
</dbReference>
<dbReference type="GO" id="GO:0000902">
    <property type="term" value="P:cell morphogenesis"/>
    <property type="evidence" value="ECO:0007669"/>
    <property type="project" value="UniProtKB-UniRule"/>
</dbReference>
<dbReference type="GO" id="GO:0071555">
    <property type="term" value="P:cell wall organization"/>
    <property type="evidence" value="ECO:0007669"/>
    <property type="project" value="UniProtKB-KW"/>
</dbReference>
<dbReference type="GO" id="GO:0009245">
    <property type="term" value="P:lipid A biosynthetic process"/>
    <property type="evidence" value="ECO:0007669"/>
    <property type="project" value="UniProtKB-UniRule"/>
</dbReference>
<dbReference type="GO" id="GO:0009252">
    <property type="term" value="P:peptidoglycan biosynthetic process"/>
    <property type="evidence" value="ECO:0007669"/>
    <property type="project" value="UniProtKB-UniRule"/>
</dbReference>
<dbReference type="GO" id="GO:0008360">
    <property type="term" value="P:regulation of cell shape"/>
    <property type="evidence" value="ECO:0007669"/>
    <property type="project" value="UniProtKB-KW"/>
</dbReference>
<dbReference type="GO" id="GO:0006048">
    <property type="term" value="P:UDP-N-acetylglucosamine biosynthetic process"/>
    <property type="evidence" value="ECO:0007669"/>
    <property type="project" value="UniProtKB-UniPathway"/>
</dbReference>
<dbReference type="CDD" id="cd02540">
    <property type="entry name" value="GT2_GlmU_N_bac"/>
    <property type="match status" value="1"/>
</dbReference>
<dbReference type="CDD" id="cd03353">
    <property type="entry name" value="LbH_GlmU_C"/>
    <property type="match status" value="1"/>
</dbReference>
<dbReference type="Gene3D" id="2.160.10.10">
    <property type="entry name" value="Hexapeptide repeat proteins"/>
    <property type="match status" value="1"/>
</dbReference>
<dbReference type="Gene3D" id="3.90.550.10">
    <property type="entry name" value="Spore Coat Polysaccharide Biosynthesis Protein SpsA, Chain A"/>
    <property type="match status" value="1"/>
</dbReference>
<dbReference type="HAMAP" id="MF_01631">
    <property type="entry name" value="GlmU"/>
    <property type="match status" value="1"/>
</dbReference>
<dbReference type="InterPro" id="IPR005882">
    <property type="entry name" value="Bifunctional_GlmU"/>
</dbReference>
<dbReference type="InterPro" id="IPR050065">
    <property type="entry name" value="GlmU-like"/>
</dbReference>
<dbReference type="InterPro" id="IPR038009">
    <property type="entry name" value="GlmU_C_LbH"/>
</dbReference>
<dbReference type="InterPro" id="IPR001451">
    <property type="entry name" value="Hexapep"/>
</dbReference>
<dbReference type="InterPro" id="IPR018357">
    <property type="entry name" value="Hexapep_transf_CS"/>
</dbReference>
<dbReference type="InterPro" id="IPR025877">
    <property type="entry name" value="MobA-like_NTP_Trfase"/>
</dbReference>
<dbReference type="InterPro" id="IPR029044">
    <property type="entry name" value="Nucleotide-diphossugar_trans"/>
</dbReference>
<dbReference type="InterPro" id="IPR011004">
    <property type="entry name" value="Trimer_LpxA-like_sf"/>
</dbReference>
<dbReference type="NCBIfam" id="TIGR01173">
    <property type="entry name" value="glmU"/>
    <property type="match status" value="1"/>
</dbReference>
<dbReference type="PANTHER" id="PTHR43584:SF3">
    <property type="entry name" value="BIFUNCTIONAL PROTEIN GLMU"/>
    <property type="match status" value="1"/>
</dbReference>
<dbReference type="PANTHER" id="PTHR43584">
    <property type="entry name" value="NUCLEOTIDYL TRANSFERASE"/>
    <property type="match status" value="1"/>
</dbReference>
<dbReference type="Pfam" id="PF00132">
    <property type="entry name" value="Hexapep"/>
    <property type="match status" value="1"/>
</dbReference>
<dbReference type="Pfam" id="PF14602">
    <property type="entry name" value="Hexapep_2"/>
    <property type="match status" value="1"/>
</dbReference>
<dbReference type="Pfam" id="PF12804">
    <property type="entry name" value="NTP_transf_3"/>
    <property type="match status" value="1"/>
</dbReference>
<dbReference type="SUPFAM" id="SSF53448">
    <property type="entry name" value="Nucleotide-diphospho-sugar transferases"/>
    <property type="match status" value="1"/>
</dbReference>
<dbReference type="SUPFAM" id="SSF51161">
    <property type="entry name" value="Trimeric LpxA-like enzymes"/>
    <property type="match status" value="1"/>
</dbReference>
<dbReference type="PROSITE" id="PS00101">
    <property type="entry name" value="HEXAPEP_TRANSFERASES"/>
    <property type="match status" value="1"/>
</dbReference>
<keyword id="KW-0012">Acyltransferase</keyword>
<keyword id="KW-0133">Cell shape</keyword>
<keyword id="KW-0961">Cell wall biogenesis/degradation</keyword>
<keyword id="KW-0963">Cytoplasm</keyword>
<keyword id="KW-0460">Magnesium</keyword>
<keyword id="KW-0479">Metal-binding</keyword>
<keyword id="KW-0511">Multifunctional enzyme</keyword>
<keyword id="KW-0548">Nucleotidyltransferase</keyword>
<keyword id="KW-0573">Peptidoglycan synthesis</keyword>
<keyword id="KW-1185">Reference proteome</keyword>
<keyword id="KW-0677">Repeat</keyword>
<keyword id="KW-0808">Transferase</keyword>
<comment type="function">
    <text evidence="1">Catalyzes the last two sequential reactions in the de novo biosynthetic pathway for UDP-N-acetylglucosamine (UDP-GlcNAc). The C-terminal domain catalyzes the transfer of acetyl group from acetyl coenzyme A to glucosamine-1-phosphate (GlcN-1-P) to produce N-acetylglucosamine-1-phosphate (GlcNAc-1-P), which is converted into UDP-GlcNAc by the transfer of uridine 5-monophosphate (from uridine 5-triphosphate), a reaction catalyzed by the N-terminal domain.</text>
</comment>
<comment type="catalytic activity">
    <reaction evidence="1">
        <text>alpha-D-glucosamine 1-phosphate + acetyl-CoA = N-acetyl-alpha-D-glucosamine 1-phosphate + CoA + H(+)</text>
        <dbReference type="Rhea" id="RHEA:13725"/>
        <dbReference type="ChEBI" id="CHEBI:15378"/>
        <dbReference type="ChEBI" id="CHEBI:57287"/>
        <dbReference type="ChEBI" id="CHEBI:57288"/>
        <dbReference type="ChEBI" id="CHEBI:57776"/>
        <dbReference type="ChEBI" id="CHEBI:58516"/>
        <dbReference type="EC" id="2.3.1.157"/>
    </reaction>
</comment>
<comment type="catalytic activity">
    <reaction evidence="1">
        <text>N-acetyl-alpha-D-glucosamine 1-phosphate + UTP + H(+) = UDP-N-acetyl-alpha-D-glucosamine + diphosphate</text>
        <dbReference type="Rhea" id="RHEA:13509"/>
        <dbReference type="ChEBI" id="CHEBI:15378"/>
        <dbReference type="ChEBI" id="CHEBI:33019"/>
        <dbReference type="ChEBI" id="CHEBI:46398"/>
        <dbReference type="ChEBI" id="CHEBI:57705"/>
        <dbReference type="ChEBI" id="CHEBI:57776"/>
        <dbReference type="EC" id="2.7.7.23"/>
    </reaction>
</comment>
<comment type="cofactor">
    <cofactor evidence="1">
        <name>Mg(2+)</name>
        <dbReference type="ChEBI" id="CHEBI:18420"/>
    </cofactor>
    <text evidence="1">Binds 1 Mg(2+) ion per subunit.</text>
</comment>
<comment type="pathway">
    <text evidence="1">Nucleotide-sugar biosynthesis; UDP-N-acetyl-alpha-D-glucosamine biosynthesis; N-acetyl-alpha-D-glucosamine 1-phosphate from alpha-D-glucosamine 6-phosphate (route II): step 2/2.</text>
</comment>
<comment type="pathway">
    <text evidence="1">Nucleotide-sugar biosynthesis; UDP-N-acetyl-alpha-D-glucosamine biosynthesis; UDP-N-acetyl-alpha-D-glucosamine from N-acetyl-alpha-D-glucosamine 1-phosphate: step 1/1.</text>
</comment>
<comment type="pathway">
    <text evidence="1">Bacterial outer membrane biogenesis; LPS lipid A biosynthesis.</text>
</comment>
<comment type="subunit">
    <text evidence="1">Homotrimer.</text>
</comment>
<comment type="subcellular location">
    <subcellularLocation>
        <location evidence="1">Cytoplasm</location>
    </subcellularLocation>
</comment>
<comment type="similarity">
    <text evidence="1">In the N-terminal section; belongs to the N-acetylglucosamine-1-phosphate uridyltransferase family.</text>
</comment>
<comment type="similarity">
    <text evidence="1">In the C-terminal section; belongs to the transferase hexapeptide repeat family.</text>
</comment>
<accession>Q0VKX6</accession>
<reference key="1">
    <citation type="journal article" date="2006" name="Nat. Biotechnol.">
        <title>Genome sequence of the ubiquitous hydrocarbon-degrading marine bacterium Alcanivorax borkumensis.</title>
        <authorList>
            <person name="Schneiker S."/>
            <person name="Martins dos Santos V.A.P."/>
            <person name="Bartels D."/>
            <person name="Bekel T."/>
            <person name="Brecht M."/>
            <person name="Buhrmester J."/>
            <person name="Chernikova T.N."/>
            <person name="Denaro R."/>
            <person name="Ferrer M."/>
            <person name="Gertler C."/>
            <person name="Goesmann A."/>
            <person name="Golyshina O.V."/>
            <person name="Kaminski F."/>
            <person name="Khachane A.N."/>
            <person name="Lang S."/>
            <person name="Linke B."/>
            <person name="McHardy A.C."/>
            <person name="Meyer F."/>
            <person name="Nechitaylo T."/>
            <person name="Puehler A."/>
            <person name="Regenhardt D."/>
            <person name="Rupp O."/>
            <person name="Sabirova J.S."/>
            <person name="Selbitschka W."/>
            <person name="Yakimov M.M."/>
            <person name="Timmis K.N."/>
            <person name="Vorhoelter F.-J."/>
            <person name="Weidner S."/>
            <person name="Kaiser O."/>
            <person name="Golyshin P.N."/>
        </authorList>
    </citation>
    <scope>NUCLEOTIDE SEQUENCE [LARGE SCALE GENOMIC DNA]</scope>
    <source>
        <strain>ATCC 700651 / DSM 11573 / NCIMB 13689 / SK2</strain>
    </source>
</reference>
<name>GLMU_ALCBS</name>
<sequence length="452" mass="48079">MSLAVVILAAGKGTRMKSALPKVLHAVAGKPMVQHVVDAAASLEPANTVIVYGHGGEQVKASVTGEQVAWAEQAEQLGTGHAVAQAMPYVKEDMVLVLYGDVPLIRPETLKDFVATVDDSTLALMTLTLDDPNGYGRIVRDGQNNVQRIVEQKDASEAELSIQEINTGILACSRRFLEESLPKLSSNNAQGEYYLTDLIAMASQSGLNVQTLQPNEGWEVDGVNDRVQLARLERIYQQAQAETLMRDGVTLLDPSRLDIRGRVQIASDVIIDVNVILEGDVTIEEGVVIGPNCILRDANIGAGTVIEANTLIDGAIVGEHCQLGPYARLRPGTELADKAKIGNFVETKKSYIGEGSKVNHLTYIGDSKIGKGVNVGAGTITCNYDGANKFQTVLKDGAFIGSNSSLVAPVTIGVNATVGAGSTITKDVGDNGLAVARTQQRNVANWQRPKKG</sequence>